<dbReference type="EMBL" id="DQ481666">
    <property type="protein sequence ID" value="ABF22424.1"/>
    <property type="molecule type" value="Genomic_DNA"/>
</dbReference>
<dbReference type="SMR" id="Q1KKX0"/>
<dbReference type="FunCoup" id="Q1KKX0">
    <property type="interactions" value="177"/>
</dbReference>
<dbReference type="STRING" id="31033.ENSTRUP00000049223"/>
<dbReference type="Ensembl" id="ENSTRUT00000052717.2">
    <property type="protein sequence ID" value="ENSTRUP00000049223.1"/>
    <property type="gene ID" value="ENSTRUG00000025198.2"/>
</dbReference>
<dbReference type="GeneID" id="101079873"/>
<dbReference type="KEGG" id="tru:101079873"/>
<dbReference type="CTD" id="58052"/>
<dbReference type="GeneTree" id="ENSGT00940000158354"/>
<dbReference type="InParanoid" id="Q1KKX0"/>
<dbReference type="OMA" id="PDARYRQ"/>
<dbReference type="OrthoDB" id="6159439at2759"/>
<dbReference type="Proteomes" id="UP000005226">
    <property type="component" value="Chromosome 1"/>
</dbReference>
<dbReference type="GO" id="GO:0005634">
    <property type="term" value="C:nucleus"/>
    <property type="evidence" value="ECO:0007669"/>
    <property type="project" value="UniProtKB-SubCell"/>
</dbReference>
<dbReference type="GO" id="GO:0000981">
    <property type="term" value="F:DNA-binding transcription factor activity, RNA polymerase II-specific"/>
    <property type="evidence" value="ECO:0007669"/>
    <property type="project" value="InterPro"/>
</dbReference>
<dbReference type="GO" id="GO:0000978">
    <property type="term" value="F:RNA polymerase II cis-regulatory region sequence-specific DNA binding"/>
    <property type="evidence" value="ECO:0007669"/>
    <property type="project" value="TreeGrafter"/>
</dbReference>
<dbReference type="GO" id="GO:0009952">
    <property type="term" value="P:anterior/posterior pattern specification"/>
    <property type="evidence" value="ECO:0007669"/>
    <property type="project" value="TreeGrafter"/>
</dbReference>
<dbReference type="CDD" id="cd00086">
    <property type="entry name" value="homeodomain"/>
    <property type="match status" value="1"/>
</dbReference>
<dbReference type="FunFam" id="1.10.10.60:FF:000055">
    <property type="entry name" value="Homeobox protein Hox-A5"/>
    <property type="match status" value="1"/>
</dbReference>
<dbReference type="Gene3D" id="1.10.10.60">
    <property type="entry name" value="Homeodomain-like"/>
    <property type="match status" value="1"/>
</dbReference>
<dbReference type="InterPro" id="IPR050296">
    <property type="entry name" value="Antp_homeobox"/>
</dbReference>
<dbReference type="InterPro" id="IPR001356">
    <property type="entry name" value="HD"/>
</dbReference>
<dbReference type="InterPro" id="IPR020479">
    <property type="entry name" value="HD_metazoa"/>
</dbReference>
<dbReference type="InterPro" id="IPR017995">
    <property type="entry name" value="Homeobox_antennapedia"/>
</dbReference>
<dbReference type="InterPro" id="IPR001827">
    <property type="entry name" value="Homeobox_Antennapedia_CS"/>
</dbReference>
<dbReference type="InterPro" id="IPR017970">
    <property type="entry name" value="Homeobox_CS"/>
</dbReference>
<dbReference type="InterPro" id="IPR009057">
    <property type="entry name" value="Homeodomain-like_sf"/>
</dbReference>
<dbReference type="PANTHER" id="PTHR45659">
    <property type="entry name" value="HOMEOBOX PROTEIN HOX"/>
    <property type="match status" value="1"/>
</dbReference>
<dbReference type="PANTHER" id="PTHR45659:SF2">
    <property type="entry name" value="HOMEOBOX PROTEIN HOX-B5"/>
    <property type="match status" value="1"/>
</dbReference>
<dbReference type="Pfam" id="PF00046">
    <property type="entry name" value="Homeodomain"/>
    <property type="match status" value="1"/>
</dbReference>
<dbReference type="PRINTS" id="PR00025">
    <property type="entry name" value="ANTENNAPEDIA"/>
</dbReference>
<dbReference type="PRINTS" id="PR00024">
    <property type="entry name" value="HOMEOBOX"/>
</dbReference>
<dbReference type="SMART" id="SM00389">
    <property type="entry name" value="HOX"/>
    <property type="match status" value="1"/>
</dbReference>
<dbReference type="SUPFAM" id="SSF46689">
    <property type="entry name" value="Homeodomain-like"/>
    <property type="match status" value="1"/>
</dbReference>
<dbReference type="PROSITE" id="PS00032">
    <property type="entry name" value="ANTENNAPEDIA"/>
    <property type="match status" value="1"/>
</dbReference>
<dbReference type="PROSITE" id="PS00027">
    <property type="entry name" value="HOMEOBOX_1"/>
    <property type="match status" value="1"/>
</dbReference>
<dbReference type="PROSITE" id="PS50071">
    <property type="entry name" value="HOMEOBOX_2"/>
    <property type="match status" value="1"/>
</dbReference>
<feature type="chain" id="PRO_0000265980" description="Homeobox protein Hox-B5b">
    <location>
        <begin position="1"/>
        <end position="280"/>
    </location>
</feature>
<feature type="DNA-binding region" description="Homeobox" evidence="2">
    <location>
        <begin position="205"/>
        <end position="264"/>
    </location>
</feature>
<feature type="region of interest" description="Disordered" evidence="3">
    <location>
        <begin position="79"/>
        <end position="185"/>
    </location>
</feature>
<feature type="short sequence motif" description="Antp-type hexapeptide">
    <location>
        <begin position="187"/>
        <end position="192"/>
    </location>
</feature>
<feature type="compositionally biased region" description="Polar residues" evidence="3">
    <location>
        <begin position="117"/>
        <end position="133"/>
    </location>
</feature>
<feature type="compositionally biased region" description="Polar residues" evidence="3">
    <location>
        <begin position="162"/>
        <end position="185"/>
    </location>
</feature>
<reference key="1">
    <citation type="journal article" date="2006" name="Proc. Natl. Acad. Sci. U.S.A.">
        <title>Highly conserved syntenic blocks at the vertebrate Hox loci and conserved regulatory elements within and outside Hox gene clusters.</title>
        <authorList>
            <person name="Lee A.P."/>
            <person name="Koh E.G.L."/>
            <person name="Tay A."/>
            <person name="Brenner S."/>
            <person name="Venkatesh B."/>
        </authorList>
    </citation>
    <scope>NUCLEOTIDE SEQUENCE [GENOMIC DNA]</scope>
</reference>
<comment type="function">
    <text evidence="1">Sequence-specific transcription factor which is part of a developmental regulatory system that provides cells with specific positional identities on the anterior-posterior axis.</text>
</comment>
<comment type="subcellular location">
    <subcellularLocation>
        <location evidence="2">Nucleus</location>
    </subcellularLocation>
</comment>
<comment type="similarity">
    <text evidence="4">Belongs to the Antp homeobox family.</text>
</comment>
<keyword id="KW-0217">Developmental protein</keyword>
<keyword id="KW-0238">DNA-binding</keyword>
<keyword id="KW-0371">Homeobox</keyword>
<keyword id="KW-0539">Nucleus</keyword>
<keyword id="KW-1185">Reference proteome</keyword>
<keyword id="KW-0804">Transcription</keyword>
<keyword id="KW-0805">Transcription regulation</keyword>
<protein>
    <recommendedName>
        <fullName>Homeobox protein Hox-B5b</fullName>
    </recommendedName>
</protein>
<organism>
    <name type="scientific">Takifugu rubripes</name>
    <name type="common">Japanese pufferfish</name>
    <name type="synonym">Fugu rubripes</name>
    <dbReference type="NCBI Taxonomy" id="31033"/>
    <lineage>
        <taxon>Eukaryota</taxon>
        <taxon>Metazoa</taxon>
        <taxon>Chordata</taxon>
        <taxon>Craniata</taxon>
        <taxon>Vertebrata</taxon>
        <taxon>Euteleostomi</taxon>
        <taxon>Actinopterygii</taxon>
        <taxon>Neopterygii</taxon>
        <taxon>Teleostei</taxon>
        <taxon>Neoteleostei</taxon>
        <taxon>Acanthomorphata</taxon>
        <taxon>Eupercaria</taxon>
        <taxon>Tetraodontiformes</taxon>
        <taxon>Tetradontoidea</taxon>
        <taxon>Tetraodontidae</taxon>
        <taxon>Takifugu</taxon>
    </lineage>
</organism>
<name>HXB5B_TAKRU</name>
<accession>Q1KKX0</accession>
<gene>
    <name type="primary">hoxb5b</name>
</gene>
<proteinExistence type="inferred from homology"/>
<sequence>MSSYFVNSFSGRYPNGSDYQLLNYGTNGAVSGSFRDPGTMHSGSFGYNYNGMDLTVNRTNTGGHFGAVREDARGFAPDARYRQTPNCSLSSPDPVPPSCATASREALELKSPSPPSDRSTTSGGNALNKSNGAHFTEIEDATAASETEEGAHSSGGSGTAPRAQQQHQDQNATSSTPTSNDCQTPQIFPWMRKLHISHDMTGPDGKRARTAYTRYQTLELEKEFHFNRYLTRRRRIEIAHALCLSERQIKIWFQNRRMKWKKDNKLKSMSLVTGGSAFHN</sequence>
<evidence type="ECO:0000250" key="1"/>
<evidence type="ECO:0000255" key="2">
    <source>
        <dbReference type="PROSITE-ProRule" id="PRU00108"/>
    </source>
</evidence>
<evidence type="ECO:0000256" key="3">
    <source>
        <dbReference type="SAM" id="MobiDB-lite"/>
    </source>
</evidence>
<evidence type="ECO:0000305" key="4"/>